<sequence length="169" mass="17826">MEIVQNFSSAALTTGILLGCLGVIFLPSIVYAAFLLGAVFFCLAGIYVLLHADFVAAAQVLVYVGAINVLILFAIMLVNPQDAPPRALDSPPLIPGIACIGLLGVLVQMISTTSWLTPPWTPEPNSLPVLGGHLFSDCLLAFEVMSLVLLVALVGAIVLARREPVERSS</sequence>
<keyword id="KW-0150">Chloroplast</keyword>
<keyword id="KW-0472">Membrane</keyword>
<keyword id="KW-0520">NAD</keyword>
<keyword id="KW-0521">NADP</keyword>
<keyword id="KW-0934">Plastid</keyword>
<keyword id="KW-0618">Plastoquinone</keyword>
<keyword id="KW-0874">Quinone</keyword>
<keyword id="KW-0793">Thylakoid</keyword>
<keyword id="KW-1278">Translocase</keyword>
<keyword id="KW-0812">Transmembrane</keyword>
<keyword id="KW-1133">Transmembrane helix</keyword>
<keyword id="KW-0813">Transport</keyword>
<dbReference type="EC" id="7.1.1.-"/>
<dbReference type="EMBL" id="AF137379">
    <property type="protein sequence ID" value="AAD54894.1"/>
    <property type="molecule type" value="Genomic_DNA"/>
</dbReference>
<dbReference type="RefSeq" id="NP_050923.1">
    <property type="nucleotide sequence ID" value="NC_000927.1"/>
</dbReference>
<dbReference type="SMR" id="Q9TKV3"/>
<dbReference type="GeneID" id="801925"/>
<dbReference type="GO" id="GO:0009535">
    <property type="term" value="C:chloroplast thylakoid membrane"/>
    <property type="evidence" value="ECO:0007669"/>
    <property type="project" value="UniProtKB-SubCell"/>
</dbReference>
<dbReference type="GO" id="GO:0008137">
    <property type="term" value="F:NADH dehydrogenase (ubiquinone) activity"/>
    <property type="evidence" value="ECO:0007669"/>
    <property type="project" value="InterPro"/>
</dbReference>
<dbReference type="GO" id="GO:0048038">
    <property type="term" value="F:quinone binding"/>
    <property type="evidence" value="ECO:0007669"/>
    <property type="project" value="UniProtKB-KW"/>
</dbReference>
<dbReference type="Gene3D" id="1.20.120.1200">
    <property type="entry name" value="NADH-ubiquinone/plastoquinone oxidoreductase chain 6, subunit NuoJ"/>
    <property type="match status" value="1"/>
</dbReference>
<dbReference type="InterPro" id="IPR001457">
    <property type="entry name" value="NADH_UbQ/plastoQ_OxRdtase_su6"/>
</dbReference>
<dbReference type="InterPro" id="IPR042106">
    <property type="entry name" value="Nuo/plastoQ_OxRdtase_6_NuoJ"/>
</dbReference>
<dbReference type="NCBIfam" id="NF005163">
    <property type="entry name" value="PRK06638.1-3"/>
    <property type="match status" value="1"/>
</dbReference>
<dbReference type="PANTHER" id="PTHR33269">
    <property type="entry name" value="NADH-UBIQUINONE OXIDOREDUCTASE CHAIN 6"/>
    <property type="match status" value="1"/>
</dbReference>
<dbReference type="PANTHER" id="PTHR33269:SF17">
    <property type="entry name" value="NADH-UBIQUINONE OXIDOREDUCTASE CHAIN 6"/>
    <property type="match status" value="1"/>
</dbReference>
<dbReference type="Pfam" id="PF00499">
    <property type="entry name" value="Oxidored_q3"/>
    <property type="match status" value="1"/>
</dbReference>
<comment type="function">
    <text evidence="1">NDH shuttles electrons from NAD(P)H:plastoquinone, via FMN and iron-sulfur (Fe-S) centers, to quinones in the photosynthetic chain and possibly in a chloroplast respiratory chain. The immediate electron acceptor for the enzyme in this species is believed to be plastoquinone. Couples the redox reaction to proton translocation, and thus conserves the redox energy in a proton gradient (By similarity).</text>
</comment>
<comment type="catalytic activity">
    <reaction>
        <text>a plastoquinone + NADH + (n+1) H(+)(in) = a plastoquinol + NAD(+) + n H(+)(out)</text>
        <dbReference type="Rhea" id="RHEA:42608"/>
        <dbReference type="Rhea" id="RHEA-COMP:9561"/>
        <dbReference type="Rhea" id="RHEA-COMP:9562"/>
        <dbReference type="ChEBI" id="CHEBI:15378"/>
        <dbReference type="ChEBI" id="CHEBI:17757"/>
        <dbReference type="ChEBI" id="CHEBI:57540"/>
        <dbReference type="ChEBI" id="CHEBI:57945"/>
        <dbReference type="ChEBI" id="CHEBI:62192"/>
    </reaction>
</comment>
<comment type="catalytic activity">
    <reaction>
        <text>a plastoquinone + NADPH + (n+1) H(+)(in) = a plastoquinol + NADP(+) + n H(+)(out)</text>
        <dbReference type="Rhea" id="RHEA:42612"/>
        <dbReference type="Rhea" id="RHEA-COMP:9561"/>
        <dbReference type="Rhea" id="RHEA-COMP:9562"/>
        <dbReference type="ChEBI" id="CHEBI:15378"/>
        <dbReference type="ChEBI" id="CHEBI:17757"/>
        <dbReference type="ChEBI" id="CHEBI:57783"/>
        <dbReference type="ChEBI" id="CHEBI:58349"/>
        <dbReference type="ChEBI" id="CHEBI:62192"/>
    </reaction>
</comment>
<comment type="subunit">
    <text evidence="1">NDH is composed of at least 16 different subunits, 5 of which are encoded in the nucleus.</text>
</comment>
<comment type="subcellular location">
    <subcellularLocation>
        <location evidence="1">Plastid</location>
        <location evidence="1">Chloroplast thylakoid membrane</location>
        <topology evidence="1">Multi-pass membrane protein</topology>
    </subcellularLocation>
</comment>
<comment type="similarity">
    <text evidence="3">Belongs to the complex I subunit 6 family.</text>
</comment>
<evidence type="ECO:0000250" key="1"/>
<evidence type="ECO:0000255" key="2"/>
<evidence type="ECO:0000305" key="3"/>
<organism>
    <name type="scientific">Nephroselmis olivacea</name>
    <name type="common">Green alga</name>
    <dbReference type="NCBI Taxonomy" id="31312"/>
    <lineage>
        <taxon>Eukaryota</taxon>
        <taxon>Viridiplantae</taxon>
        <taxon>Chlorophyta</taxon>
        <taxon>Nephroselmidophyceae</taxon>
        <taxon>Nephroselmidales</taxon>
        <taxon>Nephroselmidaceae</taxon>
        <taxon>Nephroselmis</taxon>
    </lineage>
</organism>
<protein>
    <recommendedName>
        <fullName>NAD(P)H-quinone oxidoreductase subunit 6, chloroplastic</fullName>
        <ecNumber>7.1.1.-</ecNumber>
    </recommendedName>
    <alternativeName>
        <fullName>NAD(P)H dehydrogenase subunit 6</fullName>
    </alternativeName>
    <alternativeName>
        <fullName>NADH-plastoquinone oxidoreductase subunit 6</fullName>
    </alternativeName>
</protein>
<reference key="1">
    <citation type="journal article" date="1999" name="Proc. Natl. Acad. Sci. U.S.A.">
        <title>The complete chloroplast DNA sequence of the green alga Nephroselmis olivacea: insights into the architecture of ancestral chloroplast genomes.</title>
        <authorList>
            <person name="Turmel M."/>
            <person name="Otis C."/>
            <person name="Lemieux C."/>
        </authorList>
    </citation>
    <scope>NUCLEOTIDE SEQUENCE [LARGE SCALE GENOMIC DNA]</scope>
    <source>
        <strain>NIES-484 / S-N-5-8</strain>
    </source>
</reference>
<gene>
    <name type="primary">ndhG</name>
</gene>
<feature type="chain" id="PRO_0000118358" description="NAD(P)H-quinone oxidoreductase subunit 6, chloroplastic">
    <location>
        <begin position="1"/>
        <end position="169"/>
    </location>
</feature>
<feature type="transmembrane region" description="Helical" evidence="2">
    <location>
        <begin position="7"/>
        <end position="27"/>
    </location>
</feature>
<feature type="transmembrane region" description="Helical" evidence="2">
    <location>
        <begin position="29"/>
        <end position="49"/>
    </location>
</feature>
<feature type="transmembrane region" description="Helical" evidence="2">
    <location>
        <begin position="58"/>
        <end position="78"/>
    </location>
</feature>
<feature type="transmembrane region" description="Helical" evidence="2">
    <location>
        <begin position="90"/>
        <end position="110"/>
    </location>
</feature>
<feature type="transmembrane region" description="Helical" evidence="2">
    <location>
        <begin position="139"/>
        <end position="159"/>
    </location>
</feature>
<name>NU6C_NEPOL</name>
<geneLocation type="chloroplast"/>
<accession>Q9TKV3</accession>
<proteinExistence type="inferred from homology"/>